<comment type="function">
    <text evidence="6">This is one of the three pore-forming subunits of the heterotrimeric epithelial sodium channel (ENaC), a critical regulator of sodium balance and fluid homeostasis (PubMed:7631745). ENaC operates in epithelial tissues, where it mediates the electrodiffusion of sodium ions from extracellular fluid through the apical membrane of cells, with water following osmotically (PubMed:7631745).</text>
</comment>
<comment type="catalytic activity">
    <reaction evidence="6">
        <text>Na(+)(in) = Na(+)(out)</text>
        <dbReference type="Rhea" id="RHEA:34963"/>
        <dbReference type="ChEBI" id="CHEBI:29101"/>
    </reaction>
</comment>
<comment type="activity regulation">
    <text evidence="6">Originally identified and characterized by its inhibition by the diuretic drug amiloride.</text>
</comment>
<comment type="subunit">
    <text evidence="6">Component of the heterotrimeric epithelial sodium channel (ENaC) composed of an alpha/SCNN1A, a beta/SCNN1B and a gamma/SCNN1G subunit.</text>
</comment>
<comment type="subcellular location">
    <subcellularLocation>
        <location evidence="8">Apical cell membrane</location>
        <topology evidence="1">Multi-pass membrane protein</topology>
    </subcellularLocation>
    <subcellularLocation>
        <location evidence="2">Cytoplasmic vesicle membrane</location>
        <topology evidence="1">Multi-pass membrane protein</topology>
    </subcellularLocation>
</comment>
<comment type="similarity">
    <text evidence="7">Belongs to the amiloride-sensitive sodium channel (TC 1.A.6) family. SCNN1B subfamily.</text>
</comment>
<organism>
    <name type="scientific">Xenopus laevis</name>
    <name type="common">African clawed frog</name>
    <dbReference type="NCBI Taxonomy" id="8355"/>
    <lineage>
        <taxon>Eukaryota</taxon>
        <taxon>Metazoa</taxon>
        <taxon>Chordata</taxon>
        <taxon>Craniata</taxon>
        <taxon>Vertebrata</taxon>
        <taxon>Euteleostomi</taxon>
        <taxon>Amphibia</taxon>
        <taxon>Batrachia</taxon>
        <taxon>Anura</taxon>
        <taxon>Pipoidea</taxon>
        <taxon>Pipidae</taxon>
        <taxon>Xenopodinae</taxon>
        <taxon>Xenopus</taxon>
        <taxon>Xenopus</taxon>
    </lineage>
</organism>
<evidence type="ECO:0000250" key="1">
    <source>
        <dbReference type="UniProtKB" id="P37089"/>
    </source>
</evidence>
<evidence type="ECO:0000250" key="2">
    <source>
        <dbReference type="UniProtKB" id="P37090"/>
    </source>
</evidence>
<evidence type="ECO:0000250" key="3">
    <source>
        <dbReference type="UniProtKB" id="P51168"/>
    </source>
</evidence>
<evidence type="ECO:0000255" key="4"/>
<evidence type="ECO:0000256" key="5">
    <source>
        <dbReference type="SAM" id="MobiDB-lite"/>
    </source>
</evidence>
<evidence type="ECO:0000269" key="6">
    <source>
    </source>
</evidence>
<evidence type="ECO:0000305" key="7"/>
<evidence type="ECO:0000305" key="8">
    <source>
    </source>
</evidence>
<sequence length="647" mass="73977">MIHGKMKRLKRYFTRALHRIQKGPGYTYKELLVWFCDNTNTHGPKRIIKEGPKKRVMWFILTLVFAGLVFWQWGVLILTYLSYGVSVSLSIGFKTMEFPAVTLCNANPFKYSRVKPLLKELDELVATALDRIQFSSQNQGNTFTHNNQTRQNVTLDPALWNHIPLVVIDETDPRNPIIHNIFDNNAVYSKNSSIRNSSEDQTSYSQRYKVAMKLCTNNNTQCVYRNFTSGVQALREWYLLQLSSIFSNVPLSGRIDMGFKAEDLILTCLFGGQPCSYRNFTHIYDADYGNCYIFNWGQEGENTMSSANPGADFGLKLVLDIEQGEYLPFLQTTAAARLILHQQRSFPFVKDLGIYAMPGTETSISVLVDQLEHMEAPYSSCTVNGSDIPVQNLYAEFNSSYSIQSCLRSCYQEEMVKTCKCAHYQYPLPNGSEYCTNMKHPDWVPCYYSLRDSVAIRENCISLCQQPCNDTHYKMVISMADWPSAGAEDWIFHVLSYEKDSSHNITVNRNGIVRLNIYFQEFNYRSISESEATNVVWLLSNLGGQFGFWMGGSVLCIIEFGEIIIDCMWITILKFLAWSRNRRQRRKRPQYSDPPPTVSELVEAHTNSGFQHDDGDHVPVDIPGTPPPNYDSLRVNTAEPVSSDEEN</sequence>
<name>SCNNB_XENLA</name>
<gene>
    <name type="primary">scnn1b-a</name>
</gene>
<keyword id="KW-1003">Cell membrane</keyword>
<keyword id="KW-0968">Cytoplasmic vesicle</keyword>
<keyword id="KW-1015">Disulfide bond</keyword>
<keyword id="KW-0407">Ion channel</keyword>
<keyword id="KW-0406">Ion transport</keyword>
<keyword id="KW-0472">Membrane</keyword>
<keyword id="KW-1185">Reference proteome</keyword>
<keyword id="KW-0915">Sodium</keyword>
<keyword id="KW-0894">Sodium channel</keyword>
<keyword id="KW-0739">Sodium transport</keyword>
<keyword id="KW-0812">Transmembrane</keyword>
<keyword id="KW-1133">Transmembrane helix</keyword>
<keyword id="KW-0813">Transport</keyword>
<accession>P51169</accession>
<dbReference type="EMBL" id="U25285">
    <property type="protein sequence ID" value="AAA74971.1"/>
    <property type="molecule type" value="mRNA"/>
</dbReference>
<dbReference type="SMR" id="P51169"/>
<dbReference type="AGR" id="Xenbase:XB-GENE-949114"/>
<dbReference type="Xenbase" id="XB-GENE-949114">
    <property type="gene designation" value="scnn1b.L"/>
</dbReference>
<dbReference type="Proteomes" id="UP000186698">
    <property type="component" value="Unplaced"/>
</dbReference>
<dbReference type="GO" id="GO:0016324">
    <property type="term" value="C:apical plasma membrane"/>
    <property type="evidence" value="ECO:0000250"/>
    <property type="project" value="UniProtKB"/>
</dbReference>
<dbReference type="GO" id="GO:0030659">
    <property type="term" value="C:cytoplasmic vesicle membrane"/>
    <property type="evidence" value="ECO:0007669"/>
    <property type="project" value="UniProtKB-SubCell"/>
</dbReference>
<dbReference type="GO" id="GO:0005886">
    <property type="term" value="C:plasma membrane"/>
    <property type="evidence" value="ECO:0000250"/>
    <property type="project" value="UniProtKB"/>
</dbReference>
<dbReference type="GO" id="GO:0034706">
    <property type="term" value="C:sodium channel complex"/>
    <property type="evidence" value="ECO:0000250"/>
    <property type="project" value="UniProtKB"/>
</dbReference>
<dbReference type="GO" id="GO:0015280">
    <property type="term" value="F:ligand-gated sodium channel activity"/>
    <property type="evidence" value="ECO:0000318"/>
    <property type="project" value="GO_Central"/>
</dbReference>
<dbReference type="GO" id="GO:0050891">
    <property type="term" value="P:multicellular organismal-level water homeostasis"/>
    <property type="evidence" value="ECO:0000250"/>
    <property type="project" value="UniProtKB"/>
</dbReference>
<dbReference type="GO" id="GO:0055078">
    <property type="term" value="P:sodium ion homeostasis"/>
    <property type="evidence" value="ECO:0000250"/>
    <property type="project" value="UniProtKB"/>
</dbReference>
<dbReference type="GO" id="GO:0035725">
    <property type="term" value="P:sodium ion transmembrane transport"/>
    <property type="evidence" value="ECO:0000250"/>
    <property type="project" value="UniProtKB"/>
</dbReference>
<dbReference type="FunFam" id="2.60.470.10:FF:000003">
    <property type="entry name" value="Amiloride-sensitive sodium channel subunit beta"/>
    <property type="match status" value="1"/>
</dbReference>
<dbReference type="FunFam" id="1.10.287.770:FF:000002">
    <property type="entry name" value="Amiloride-sensitive sodium channel subunit beta 1"/>
    <property type="match status" value="1"/>
</dbReference>
<dbReference type="Gene3D" id="2.60.470.10">
    <property type="entry name" value="Acid-sensing ion channels like domains"/>
    <property type="match status" value="1"/>
</dbReference>
<dbReference type="Gene3D" id="1.10.287.770">
    <property type="entry name" value="YojJ-like"/>
    <property type="match status" value="1"/>
</dbReference>
<dbReference type="InterPro" id="IPR001873">
    <property type="entry name" value="ENaC"/>
</dbReference>
<dbReference type="InterPro" id="IPR004724">
    <property type="entry name" value="ENaC_chordates"/>
</dbReference>
<dbReference type="InterPro" id="IPR020903">
    <property type="entry name" value="ENaC_CS"/>
</dbReference>
<dbReference type="NCBIfam" id="TIGR00859">
    <property type="entry name" value="ENaC"/>
    <property type="match status" value="1"/>
</dbReference>
<dbReference type="PANTHER" id="PTHR11690:SF18">
    <property type="entry name" value="AMILORIDE-SENSITIVE SODIUM CHANNEL SUBUNIT BETA"/>
    <property type="match status" value="1"/>
</dbReference>
<dbReference type="PANTHER" id="PTHR11690">
    <property type="entry name" value="AMILORIDE-SENSITIVE SODIUM CHANNEL-RELATED"/>
    <property type="match status" value="1"/>
</dbReference>
<dbReference type="Pfam" id="PF00858">
    <property type="entry name" value="ASC"/>
    <property type="match status" value="1"/>
</dbReference>
<dbReference type="PRINTS" id="PR01078">
    <property type="entry name" value="AMINACHANNEL"/>
</dbReference>
<dbReference type="PROSITE" id="PS01206">
    <property type="entry name" value="ASC"/>
    <property type="match status" value="1"/>
</dbReference>
<feature type="chain" id="PRO_0000181274" description="Epithelial sodium channel subunit beta">
    <location>
        <begin position="1"/>
        <end position="647"/>
    </location>
</feature>
<feature type="topological domain" description="Cytoplasmic" evidence="1">
    <location>
        <begin position="1"/>
        <end position="57"/>
    </location>
</feature>
<feature type="transmembrane region" description="Helical; Name=1" evidence="4">
    <location>
        <begin position="58"/>
        <end position="78"/>
    </location>
</feature>
<feature type="topological domain" description="Extracellular" evidence="1">
    <location>
        <begin position="79"/>
        <end position="552"/>
    </location>
</feature>
<feature type="transmembrane region" description="Helical; Name=2" evidence="4">
    <location>
        <begin position="553"/>
        <end position="573"/>
    </location>
</feature>
<feature type="topological domain" description="Cytoplasmic" evidence="1">
    <location>
        <begin position="574"/>
        <end position="647"/>
    </location>
</feature>
<feature type="region of interest" description="Disordered" evidence="5">
    <location>
        <begin position="586"/>
        <end position="647"/>
    </location>
</feature>
<feature type="disulfide bond" evidence="3">
    <location>
        <begin position="104"/>
        <end position="291"/>
    </location>
</feature>
<feature type="disulfide bond" evidence="3">
    <location>
        <begin position="215"/>
        <end position="222"/>
    </location>
</feature>
<feature type="disulfide bond" evidence="3">
    <location>
        <begin position="268"/>
        <end position="275"/>
    </location>
</feature>
<feature type="disulfide bond" evidence="3">
    <location>
        <begin position="381"/>
        <end position="468"/>
    </location>
</feature>
<feature type="disulfide bond" evidence="3">
    <location>
        <begin position="406"/>
        <end position="464"/>
    </location>
</feature>
<feature type="disulfide bond" evidence="3">
    <location>
        <begin position="410"/>
        <end position="460"/>
    </location>
</feature>
<feature type="disulfide bond" evidence="3">
    <location>
        <begin position="419"/>
        <end position="446"/>
    </location>
</feature>
<feature type="disulfide bond" evidence="3">
    <location>
        <begin position="421"/>
        <end position="435"/>
    </location>
</feature>
<proteinExistence type="evidence at protein level"/>
<reference key="1">
    <citation type="journal article" date="1995" name="Am. J. Physiol.">
        <title>The highly selective low-conductance epithelial Na channel of Xenopus laevis A6 kidney cells.</title>
        <authorList>
            <person name="Puoti A."/>
            <person name="May A."/>
            <person name="Canessa C.M."/>
            <person name="Horisberger J.-D."/>
            <person name="Schild L."/>
            <person name="Rossier B.C."/>
        </authorList>
    </citation>
    <scope>NUCLEOTIDE SEQUENCE [MRNA]</scope>
    <scope>FUNCTION</scope>
    <scope>TRANSPORTER ACTIVITY</scope>
    <scope>ACTIVITY REGULATION</scope>
    <scope>SUBUNIT</scope>
    <scope>SUBCELLULAR LOCATION</scope>
    <source>
        <tissue>Kidney</tissue>
    </source>
</reference>
<protein>
    <recommendedName>
        <fullName evidence="8">Epithelial sodium channel subunit beta</fullName>
    </recommendedName>
    <alternativeName>
        <fullName>Amiloride-sensitive sodium channel subunit beta</fullName>
    </alternativeName>
    <alternativeName>
        <fullName>Beta-NaCH</fullName>
    </alternativeName>
    <alternativeName>
        <fullName>Epithelial Na(+) channel subunit beta</fullName>
        <shortName>Beta-ENaC</shortName>
    </alternativeName>
    <alternativeName>
        <fullName>Nonvoltage-gated sodium channel 1 subunit beta</fullName>
    </alternativeName>
    <alternativeName>
        <fullName>SCNEB</fullName>
    </alternativeName>
</protein>